<accession>Q6GZW8</accession>
<reference key="1">
    <citation type="journal article" date="2004" name="Virology">
        <title>Comparative genomic analyses of frog virus 3, type species of the genus Ranavirus (family Iridoviridae).</title>
        <authorList>
            <person name="Tan W.G."/>
            <person name="Barkman T.J."/>
            <person name="Gregory Chinchar V."/>
            <person name="Essani K."/>
        </authorList>
    </citation>
    <scope>NUCLEOTIDE SEQUENCE [LARGE SCALE GENOMIC DNA]</scope>
</reference>
<protein>
    <recommendedName>
        <fullName>Uncharacterized protein 007R</fullName>
    </recommendedName>
</protein>
<proteinExistence type="predicted"/>
<name>007R_FRG3G</name>
<organism>
    <name type="scientific">Frog virus 3 (isolate Goorha)</name>
    <name type="common">FV-3</name>
    <dbReference type="NCBI Taxonomy" id="654924"/>
    <lineage>
        <taxon>Viruses</taxon>
        <taxon>Varidnaviria</taxon>
        <taxon>Bamfordvirae</taxon>
        <taxon>Nucleocytoviricota</taxon>
        <taxon>Megaviricetes</taxon>
        <taxon>Pimascovirales</taxon>
        <taxon>Iridoviridae</taxon>
        <taxon>Alphairidovirinae</taxon>
        <taxon>Ranavirus</taxon>
        <taxon>Frog virus 3</taxon>
    </lineage>
</organism>
<gene>
    <name type="ORF">FV3-007R</name>
</gene>
<dbReference type="EMBL" id="AY548484">
    <property type="protein sequence ID" value="AAT09666.1"/>
    <property type="molecule type" value="Genomic_DNA"/>
</dbReference>
<dbReference type="RefSeq" id="YP_031585.1">
    <property type="nucleotide sequence ID" value="NC_005946.1"/>
</dbReference>
<dbReference type="KEGG" id="vg:2947779"/>
<dbReference type="Proteomes" id="UP000008770">
    <property type="component" value="Segment"/>
</dbReference>
<sequence length="128" mass="13707">MRSIKPLRCCNAHGRHVSQEYGRCTLLLFREKLFLQTGLVCNKQCNAPNNDGAESKHHGIHHGSRGALALRGAGVHLLASAALGPRVLAGLVPTGRSVQGSVGQCGRVAQIGRARDVAARKQESYCEK</sequence>
<organismHost>
    <name type="scientific">Dryophytes versicolor</name>
    <name type="common">chameleon treefrog</name>
    <dbReference type="NCBI Taxonomy" id="30343"/>
</organismHost>
<organismHost>
    <name type="scientific">Lithobates pipiens</name>
    <name type="common">Northern leopard frog</name>
    <name type="synonym">Rana pipiens</name>
    <dbReference type="NCBI Taxonomy" id="8404"/>
</organismHost>
<organismHost>
    <name type="scientific">Lithobates sylvaticus</name>
    <name type="common">Wood frog</name>
    <name type="synonym">Rana sylvatica</name>
    <dbReference type="NCBI Taxonomy" id="45438"/>
</organismHost>
<organismHost>
    <name type="scientific">Notophthalmus viridescens</name>
    <name type="common">Eastern newt</name>
    <name type="synonym">Triturus viridescens</name>
    <dbReference type="NCBI Taxonomy" id="8316"/>
</organismHost>
<keyword id="KW-1185">Reference proteome</keyword>
<feature type="chain" id="PRO_0000410565" description="Uncharacterized protein 007R">
    <location>
        <begin position="1"/>
        <end position="128"/>
    </location>
</feature>